<evidence type="ECO:0000255" key="1">
    <source>
        <dbReference type="HAMAP-Rule" id="MF_00460"/>
    </source>
</evidence>
<accession>B7LDK6</accession>
<gene>
    <name evidence="1" type="primary">rnfH</name>
    <name type="ordered locus">EC55989_2906</name>
</gene>
<proteinExistence type="inferred from homology"/>
<feature type="chain" id="PRO_1000200173" description="Protein RnfH">
    <location>
        <begin position="1"/>
        <end position="96"/>
    </location>
</feature>
<dbReference type="EMBL" id="CU928145">
    <property type="protein sequence ID" value="CAU98773.1"/>
    <property type="molecule type" value="Genomic_DNA"/>
</dbReference>
<dbReference type="RefSeq" id="WP_001117838.1">
    <property type="nucleotide sequence ID" value="NC_011748.1"/>
</dbReference>
<dbReference type="SMR" id="B7LDK6"/>
<dbReference type="KEGG" id="eck:EC55989_2906"/>
<dbReference type="HOGENOM" id="CLU_150721_1_0_6"/>
<dbReference type="Proteomes" id="UP000000746">
    <property type="component" value="Chromosome"/>
</dbReference>
<dbReference type="Gene3D" id="3.10.20.280">
    <property type="entry name" value="RnfH-like"/>
    <property type="match status" value="1"/>
</dbReference>
<dbReference type="HAMAP" id="MF_00460">
    <property type="entry name" value="UPF0125_RnfH"/>
    <property type="match status" value="1"/>
</dbReference>
<dbReference type="InterPro" id="IPR016155">
    <property type="entry name" value="Mopterin_synth/thiamin_S_b"/>
</dbReference>
<dbReference type="InterPro" id="IPR005346">
    <property type="entry name" value="RnfH"/>
</dbReference>
<dbReference type="InterPro" id="IPR037021">
    <property type="entry name" value="RnfH_sf"/>
</dbReference>
<dbReference type="NCBIfam" id="NF002490">
    <property type="entry name" value="PRK01777.1"/>
    <property type="match status" value="1"/>
</dbReference>
<dbReference type="PANTHER" id="PTHR37483">
    <property type="entry name" value="UPF0125 PROTEIN RATB"/>
    <property type="match status" value="1"/>
</dbReference>
<dbReference type="PANTHER" id="PTHR37483:SF1">
    <property type="entry name" value="UPF0125 PROTEIN RATB"/>
    <property type="match status" value="1"/>
</dbReference>
<dbReference type="Pfam" id="PF03658">
    <property type="entry name" value="Ub-RnfH"/>
    <property type="match status" value="1"/>
</dbReference>
<dbReference type="SUPFAM" id="SSF54285">
    <property type="entry name" value="MoaD/ThiS"/>
    <property type="match status" value="1"/>
</dbReference>
<sequence>MPGKIAVEVAYALPEKQYLQRVTLQEGATVEEAIRASGLLELRTDIDLTKNKVGIYSRPAKLSDSVHDGDRVEIYRPLIADPKELRRQRAEKSANK</sequence>
<keyword id="KW-1185">Reference proteome</keyword>
<organism>
    <name type="scientific">Escherichia coli (strain 55989 / EAEC)</name>
    <dbReference type="NCBI Taxonomy" id="585055"/>
    <lineage>
        <taxon>Bacteria</taxon>
        <taxon>Pseudomonadati</taxon>
        <taxon>Pseudomonadota</taxon>
        <taxon>Gammaproteobacteria</taxon>
        <taxon>Enterobacterales</taxon>
        <taxon>Enterobacteriaceae</taxon>
        <taxon>Escherichia</taxon>
    </lineage>
</organism>
<comment type="similarity">
    <text evidence="1">Belongs to the UPF0125 (RnfH) family.</text>
</comment>
<protein>
    <recommendedName>
        <fullName evidence="1">Protein RnfH</fullName>
    </recommendedName>
</protein>
<reference key="1">
    <citation type="journal article" date="2009" name="PLoS Genet.">
        <title>Organised genome dynamics in the Escherichia coli species results in highly diverse adaptive paths.</title>
        <authorList>
            <person name="Touchon M."/>
            <person name="Hoede C."/>
            <person name="Tenaillon O."/>
            <person name="Barbe V."/>
            <person name="Baeriswyl S."/>
            <person name="Bidet P."/>
            <person name="Bingen E."/>
            <person name="Bonacorsi S."/>
            <person name="Bouchier C."/>
            <person name="Bouvet O."/>
            <person name="Calteau A."/>
            <person name="Chiapello H."/>
            <person name="Clermont O."/>
            <person name="Cruveiller S."/>
            <person name="Danchin A."/>
            <person name="Diard M."/>
            <person name="Dossat C."/>
            <person name="Karoui M.E."/>
            <person name="Frapy E."/>
            <person name="Garry L."/>
            <person name="Ghigo J.M."/>
            <person name="Gilles A.M."/>
            <person name="Johnson J."/>
            <person name="Le Bouguenec C."/>
            <person name="Lescat M."/>
            <person name="Mangenot S."/>
            <person name="Martinez-Jehanne V."/>
            <person name="Matic I."/>
            <person name="Nassif X."/>
            <person name="Oztas S."/>
            <person name="Petit M.A."/>
            <person name="Pichon C."/>
            <person name="Rouy Z."/>
            <person name="Ruf C.S."/>
            <person name="Schneider D."/>
            <person name="Tourret J."/>
            <person name="Vacherie B."/>
            <person name="Vallenet D."/>
            <person name="Medigue C."/>
            <person name="Rocha E.P.C."/>
            <person name="Denamur E."/>
        </authorList>
    </citation>
    <scope>NUCLEOTIDE SEQUENCE [LARGE SCALE GENOMIC DNA]</scope>
    <source>
        <strain>55989 / EAEC</strain>
    </source>
</reference>
<name>RNFH_ECO55</name>